<comment type="function">
    <text evidence="1">Plays a role in innate immunity.</text>
</comment>
<comment type="subcellular location">
    <subcellularLocation>
        <location evidence="1">Endosome membrane</location>
        <topology evidence="1">Multi-pass membrane protein</topology>
    </subcellularLocation>
    <subcellularLocation>
        <location evidence="1">Lysosome membrane</location>
        <topology evidence="1">Multi-pass membrane protein</topology>
    </subcellularLocation>
    <subcellularLocation>
        <location evidence="1">Golgi apparatus</location>
        <location evidence="1">trans-Golgi network membrane</location>
        <topology evidence="1">Multi-pass membrane protein</topology>
    </subcellularLocation>
</comment>
<comment type="similarity">
    <text evidence="3">Belongs to the TMEM45 family.</text>
</comment>
<evidence type="ECO:0000250" key="1">
    <source>
        <dbReference type="UniProtKB" id="Q96B21"/>
    </source>
</evidence>
<evidence type="ECO:0000255" key="2"/>
<evidence type="ECO:0000305" key="3"/>
<evidence type="ECO:0007744" key="4">
    <source>
    </source>
</evidence>
<proteinExistence type="evidence at protein level"/>
<dbReference type="EMBL" id="BC100635">
    <property type="protein sequence ID" value="AAI00636.1"/>
    <property type="molecule type" value="mRNA"/>
</dbReference>
<dbReference type="RefSeq" id="NP_001028239.1">
    <property type="nucleotide sequence ID" value="NM_001033067.2"/>
</dbReference>
<dbReference type="RefSeq" id="XP_017451104.1">
    <property type="nucleotide sequence ID" value="XM_017595615.1"/>
</dbReference>
<dbReference type="SMR" id="Q497B2"/>
<dbReference type="FunCoup" id="Q497B2">
    <property type="interactions" value="18"/>
</dbReference>
<dbReference type="STRING" id="10116.ENSRNOP00000011329"/>
<dbReference type="iPTMnet" id="Q497B2"/>
<dbReference type="PhosphoSitePlus" id="Q497B2"/>
<dbReference type="PaxDb" id="10116-ENSRNOP00000011329"/>
<dbReference type="Ensembl" id="ENSRNOT00000011329.5">
    <property type="protein sequence ID" value="ENSRNOP00000011329.4"/>
    <property type="gene ID" value="ENSRNOG00000008515.6"/>
</dbReference>
<dbReference type="GeneID" id="315524"/>
<dbReference type="KEGG" id="rno:315524"/>
<dbReference type="UCSC" id="RGD:1305586">
    <property type="organism name" value="rat"/>
</dbReference>
<dbReference type="AGR" id="RGD:1305586"/>
<dbReference type="CTD" id="120224"/>
<dbReference type="RGD" id="1305586">
    <property type="gene designation" value="Tmem45b"/>
</dbReference>
<dbReference type="eggNOG" id="ENOG502QU0J">
    <property type="taxonomic scope" value="Eukaryota"/>
</dbReference>
<dbReference type="GeneTree" id="ENSGT00940000157181"/>
<dbReference type="HOGENOM" id="CLU_059568_0_0_1"/>
<dbReference type="InParanoid" id="Q497B2"/>
<dbReference type="OMA" id="SWYLSAT"/>
<dbReference type="OrthoDB" id="551896at2759"/>
<dbReference type="PhylomeDB" id="Q497B2"/>
<dbReference type="TreeFam" id="TF328673"/>
<dbReference type="PRO" id="PR:Q497B2"/>
<dbReference type="Proteomes" id="UP000002494">
    <property type="component" value="Chromosome 8"/>
</dbReference>
<dbReference type="Bgee" id="ENSRNOG00000008515">
    <property type="expression patterns" value="Expressed in jejunum and 14 other cell types or tissues"/>
</dbReference>
<dbReference type="GO" id="GO:0010008">
    <property type="term" value="C:endosome membrane"/>
    <property type="evidence" value="ECO:0007669"/>
    <property type="project" value="UniProtKB-SubCell"/>
</dbReference>
<dbReference type="GO" id="GO:0005794">
    <property type="term" value="C:Golgi apparatus"/>
    <property type="evidence" value="ECO:0007669"/>
    <property type="project" value="UniProtKB-SubCell"/>
</dbReference>
<dbReference type="GO" id="GO:0005765">
    <property type="term" value="C:lysosomal membrane"/>
    <property type="evidence" value="ECO:0007669"/>
    <property type="project" value="UniProtKB-SubCell"/>
</dbReference>
<dbReference type="GO" id="GO:0045087">
    <property type="term" value="P:innate immune response"/>
    <property type="evidence" value="ECO:0007669"/>
    <property type="project" value="UniProtKB-KW"/>
</dbReference>
<dbReference type="InterPro" id="IPR006904">
    <property type="entry name" value="DUF716"/>
</dbReference>
<dbReference type="InterPro" id="IPR042127">
    <property type="entry name" value="TMEM45"/>
</dbReference>
<dbReference type="PANTHER" id="PTHR16007">
    <property type="entry name" value="EPIDIDYMAL MEMBRANE PROTEIN E9-RELATED"/>
    <property type="match status" value="1"/>
</dbReference>
<dbReference type="PANTHER" id="PTHR16007:SF59">
    <property type="entry name" value="TRANSMEMBRANE PROTEIN 45B"/>
    <property type="match status" value="1"/>
</dbReference>
<dbReference type="Pfam" id="PF04819">
    <property type="entry name" value="DUF716"/>
    <property type="match status" value="1"/>
</dbReference>
<accession>Q497B2</accession>
<keyword id="KW-0967">Endosome</keyword>
<keyword id="KW-0333">Golgi apparatus</keyword>
<keyword id="KW-0391">Immunity</keyword>
<keyword id="KW-0399">Innate immunity</keyword>
<keyword id="KW-0458">Lysosome</keyword>
<keyword id="KW-0472">Membrane</keyword>
<keyword id="KW-0597">Phosphoprotein</keyword>
<keyword id="KW-1185">Reference proteome</keyword>
<keyword id="KW-0812">Transmembrane</keyword>
<keyword id="KW-1133">Transmembrane helix</keyword>
<name>TM45B_RAT</name>
<feature type="chain" id="PRO_0000271201" description="Transmembrane protein 45B">
    <location>
        <begin position="1"/>
        <end position="278"/>
    </location>
</feature>
<feature type="transmembrane region" description="Helical" evidence="2">
    <location>
        <begin position="7"/>
        <end position="27"/>
    </location>
</feature>
<feature type="transmembrane region" description="Helical" evidence="2">
    <location>
        <begin position="49"/>
        <end position="69"/>
    </location>
</feature>
<feature type="transmembrane region" description="Helical" evidence="2">
    <location>
        <begin position="95"/>
        <end position="115"/>
    </location>
</feature>
<feature type="transmembrane region" description="Helical" evidence="2">
    <location>
        <begin position="117"/>
        <end position="137"/>
    </location>
</feature>
<feature type="transmembrane region" description="Helical" evidence="2">
    <location>
        <begin position="149"/>
        <end position="169"/>
    </location>
</feature>
<feature type="transmembrane region" description="Helical" evidence="2">
    <location>
        <begin position="183"/>
        <end position="203"/>
    </location>
</feature>
<feature type="transmembrane region" description="Helical" evidence="2">
    <location>
        <begin position="215"/>
        <end position="235"/>
    </location>
</feature>
<feature type="modified residue" description="Phosphoserine" evidence="4">
    <location>
        <position position="273"/>
    </location>
</feature>
<feature type="modified residue" description="Phosphoserine" evidence="4">
    <location>
        <position position="275"/>
    </location>
</feature>
<organism>
    <name type="scientific">Rattus norvegicus</name>
    <name type="common">Rat</name>
    <dbReference type="NCBI Taxonomy" id="10116"/>
    <lineage>
        <taxon>Eukaryota</taxon>
        <taxon>Metazoa</taxon>
        <taxon>Chordata</taxon>
        <taxon>Craniata</taxon>
        <taxon>Vertebrata</taxon>
        <taxon>Euteleostomi</taxon>
        <taxon>Mammalia</taxon>
        <taxon>Eutheria</taxon>
        <taxon>Euarchontoglires</taxon>
        <taxon>Glires</taxon>
        <taxon>Rodentia</taxon>
        <taxon>Myomorpha</taxon>
        <taxon>Muroidea</taxon>
        <taxon>Muridae</taxon>
        <taxon>Murinae</taxon>
        <taxon>Rattus</taxon>
    </lineage>
</organism>
<protein>
    <recommendedName>
        <fullName>Transmembrane protein 45B</fullName>
    </recommendedName>
</protein>
<reference key="1">
    <citation type="journal article" date="2004" name="Genome Res.">
        <title>The status, quality, and expansion of the NIH full-length cDNA project: the Mammalian Gene Collection (MGC).</title>
        <authorList>
            <consortium name="The MGC Project Team"/>
        </authorList>
    </citation>
    <scope>NUCLEOTIDE SEQUENCE [LARGE SCALE MRNA]</scope>
    <source>
        <tissue>Prostate</tissue>
    </source>
</reference>
<reference key="2">
    <citation type="journal article" date="2012" name="Nat. Commun.">
        <title>Quantitative maps of protein phosphorylation sites across 14 different rat organs and tissues.</title>
        <authorList>
            <person name="Lundby A."/>
            <person name="Secher A."/>
            <person name="Lage K."/>
            <person name="Nordsborg N.B."/>
            <person name="Dmytriyev A."/>
            <person name="Lundby C."/>
            <person name="Olsen J.V."/>
        </authorList>
    </citation>
    <scope>PHOSPHORYLATION [LARGE SCALE ANALYSIS] AT SER-273 AND SER-275</scope>
    <scope>IDENTIFICATION BY MASS SPECTROMETRY [LARGE SCALE ANALYSIS]</scope>
</reference>
<gene>
    <name type="primary">Tmem45b</name>
</gene>
<sequence>MANFKGHALPGSFFLIFGLWWSVKYPLKYFHQKGLKKNRLSLQQQRIEIIEGAVKALFAVIGILAEQFVPDGPHLHLYHENQWTKLMNWQHSTMYLFFGVSGIIDMLTYLYFNIVPLGLDRVVLAMAVFVEGFLFYFHVHGRPPLDQHIHSLLLFSLFGATISICLEVILRDNIVLELFRTTLLILQGTWFWQIGFVLFPPFGTPEWDQKDMDNVMFITMCFCWHYLVALCITAINYSLVYCFLTRVRRRAEGEIIGIQKLKSDHTYQSTLLSGSDEE</sequence>